<proteinExistence type="inferred from homology"/>
<name>MZRA_PECCP</name>
<keyword id="KW-0997">Cell inner membrane</keyword>
<keyword id="KW-1003">Cell membrane</keyword>
<keyword id="KW-0472">Membrane</keyword>
<keyword id="KW-0812">Transmembrane</keyword>
<keyword id="KW-1133">Transmembrane helix</keyword>
<feature type="chain" id="PRO_0000413192" description="Modulator protein MzrA">
    <location>
        <begin position="1"/>
        <end position="131"/>
    </location>
</feature>
<feature type="topological domain" description="Cytoplasmic" evidence="1">
    <location>
        <begin position="1"/>
        <end position="14"/>
    </location>
</feature>
<feature type="transmembrane region" description="Helical" evidence="1">
    <location>
        <begin position="15"/>
        <end position="31"/>
    </location>
</feature>
<feature type="topological domain" description="Periplasmic" evidence="1">
    <location>
        <begin position="32"/>
        <end position="131"/>
    </location>
</feature>
<protein>
    <recommendedName>
        <fullName evidence="1">Modulator protein MzrA</fullName>
    </recommendedName>
</protein>
<reference key="1">
    <citation type="submission" date="2009-07" db="EMBL/GenBank/DDBJ databases">
        <title>Complete sequence of Pectobacterium carotovorum subsp. carotovorum PC1.</title>
        <authorList>
            <consortium name="US DOE Joint Genome Institute"/>
            <person name="Lucas S."/>
            <person name="Copeland A."/>
            <person name="Lapidus A."/>
            <person name="Glavina del Rio T."/>
            <person name="Tice H."/>
            <person name="Bruce D."/>
            <person name="Goodwin L."/>
            <person name="Pitluck S."/>
            <person name="Munk A.C."/>
            <person name="Brettin T."/>
            <person name="Detter J.C."/>
            <person name="Han C."/>
            <person name="Tapia R."/>
            <person name="Larimer F."/>
            <person name="Land M."/>
            <person name="Hauser L."/>
            <person name="Kyrpides N."/>
            <person name="Mikhailova N."/>
            <person name="Balakrishnan V."/>
            <person name="Glasner J."/>
            <person name="Perna N.T."/>
        </authorList>
    </citation>
    <scope>NUCLEOTIDE SEQUENCE [LARGE SCALE GENOMIC DNA]</scope>
    <source>
        <strain>PC1</strain>
    </source>
</reference>
<comment type="function">
    <text evidence="1">Modulates the activity of the EnvZ/OmpR two-component regulatory system, probably by directly modulating EnvZ enzymatic activity and increasing stability of phosphorylated OmpR.</text>
</comment>
<comment type="subunit">
    <text evidence="1">Interacts with EnvZ.</text>
</comment>
<comment type="subcellular location">
    <subcellularLocation>
        <location evidence="1">Cell inner membrane</location>
        <topology evidence="1">Single-pass membrane protein</topology>
    </subcellularLocation>
</comment>
<comment type="similarity">
    <text evidence="1">Belongs to the MzrA family.</text>
</comment>
<evidence type="ECO:0000255" key="1">
    <source>
        <dbReference type="HAMAP-Rule" id="MF_00904"/>
    </source>
</evidence>
<accession>C6DKE3</accession>
<gene>
    <name evidence="1" type="primary">mzrA</name>
    <name type="ordered locus">PC1_0525</name>
</gene>
<dbReference type="EMBL" id="CP001657">
    <property type="protein sequence ID" value="ACT11580.1"/>
    <property type="molecule type" value="Genomic_DNA"/>
</dbReference>
<dbReference type="RefSeq" id="WP_012773232.1">
    <property type="nucleotide sequence ID" value="NC_012917.1"/>
</dbReference>
<dbReference type="SMR" id="C6DKE3"/>
<dbReference type="STRING" id="561230.PC1_0525"/>
<dbReference type="KEGG" id="pct:PC1_0525"/>
<dbReference type="eggNOG" id="ENOG50333DY">
    <property type="taxonomic scope" value="Bacteria"/>
</dbReference>
<dbReference type="HOGENOM" id="CLU_153761_1_0_6"/>
<dbReference type="OrthoDB" id="6414235at2"/>
<dbReference type="Proteomes" id="UP000002736">
    <property type="component" value="Chromosome"/>
</dbReference>
<dbReference type="GO" id="GO:0005886">
    <property type="term" value="C:plasma membrane"/>
    <property type="evidence" value="ECO:0007669"/>
    <property type="project" value="UniProtKB-SubCell"/>
</dbReference>
<dbReference type="GO" id="GO:0019901">
    <property type="term" value="F:protein kinase binding"/>
    <property type="evidence" value="ECO:0007669"/>
    <property type="project" value="UniProtKB-UniRule"/>
</dbReference>
<dbReference type="Gene3D" id="3.30.70.260">
    <property type="match status" value="1"/>
</dbReference>
<dbReference type="HAMAP" id="MF_00904">
    <property type="entry name" value="Modulator_MzrA"/>
    <property type="match status" value="1"/>
</dbReference>
<dbReference type="InterPro" id="IPR026574">
    <property type="entry name" value="Modulator_MzrA"/>
</dbReference>
<dbReference type="InterPro" id="IPR027398">
    <property type="entry name" value="SecD-TM"/>
</dbReference>
<dbReference type="NCBIfam" id="NF007915">
    <property type="entry name" value="PRK10629.1"/>
    <property type="match status" value="1"/>
</dbReference>
<dbReference type="Pfam" id="PF13721">
    <property type="entry name" value="SecD-TM1"/>
    <property type="match status" value="1"/>
</dbReference>
<organism>
    <name type="scientific">Pectobacterium carotovorum subsp. carotovorum (strain PC1)</name>
    <dbReference type="NCBI Taxonomy" id="561230"/>
    <lineage>
        <taxon>Bacteria</taxon>
        <taxon>Pseudomonadati</taxon>
        <taxon>Pseudomonadota</taxon>
        <taxon>Gammaproteobacteria</taxon>
        <taxon>Enterobacterales</taxon>
        <taxon>Pectobacteriaceae</taxon>
        <taxon>Pectobacterium</taxon>
    </lineage>
</organism>
<sequence length="131" mass="14714">MSIRWLFPKLTPRKVARILILLALPIIALTQSQSLRHSQDDAMLHIKPYDGAALPDGFYVYQRLNEKGIAIKSITPEQDSLIVRLASPEQSIAARDVLRLSLPKVTITAQQATTPTPFWQQKLTQKQSKLG</sequence>